<name>CYOE_PSEPU</name>
<gene>
    <name type="primary">cyoE</name>
</gene>
<sequence length="295" mass="31764">MSVKHFIQITKPGIIFGNVLSVAGGFFLASKGHVDFALFLAVVIGTSLVVASGCVFNNCIDRDIDHKMERTKNRVMVQGGMSLPLALIYATLLGVAGFSLLYVQANPLSAFCALIGFIVYVGFYSLWLKRKSVHGTLVGSLSGAMPPVIGYCAVSNSFDLAAVTLLVMFSLWQMPHSFAIAIFRFKDYSAANIPVLPVARGILAAKKQIVLYVLAFVLATLMLTLGGYAGLGYLAVAAAMGLYWLYMAWGGYKAEDDSKWARKVFGFSILTVTALSVMMGVDSQTAADVLMTYAR</sequence>
<reference key="1">
    <citation type="journal article" date="1998" name="FEMS Microbiol. Lett.">
        <title>Isolation and characterization of toluene-sensitive mutants from Pseudomonas putida IH-2000.</title>
        <authorList>
            <person name="Hirayama H."/>
            <person name="Takami H."/>
            <person name="Inoue A."/>
            <person name="Horikoshi K."/>
        </authorList>
    </citation>
    <scope>NUCLEOTIDE SEQUENCE [GENOMIC DNA]</scope>
    <source>
        <strain>IH-2000</strain>
    </source>
</reference>
<evidence type="ECO:0000250" key="1"/>
<evidence type="ECO:0000255" key="2"/>
<evidence type="ECO:0000305" key="3"/>
<protein>
    <recommendedName>
        <fullName>Protoheme IX farnesyltransferase</fullName>
        <ecNumber>2.5.1.141</ecNumber>
    </recommendedName>
    <alternativeName>
        <fullName>Heme O synthase</fullName>
    </alternativeName>
</protein>
<accession>Q9WWR5</accession>
<keyword id="KW-0997">Cell inner membrane</keyword>
<keyword id="KW-1003">Cell membrane</keyword>
<keyword id="KW-0350">Heme biosynthesis</keyword>
<keyword id="KW-0472">Membrane</keyword>
<keyword id="KW-0808">Transferase</keyword>
<keyword id="KW-0812">Transmembrane</keyword>
<keyword id="KW-1133">Transmembrane helix</keyword>
<proteinExistence type="inferred from homology"/>
<comment type="function">
    <text evidence="1">Converts protoheme IX and farnesyl diphosphate to heme O.</text>
</comment>
<comment type="catalytic activity">
    <reaction>
        <text>heme b + (2E,6E)-farnesyl diphosphate + H2O = Fe(II)-heme o + diphosphate</text>
        <dbReference type="Rhea" id="RHEA:28070"/>
        <dbReference type="ChEBI" id="CHEBI:15377"/>
        <dbReference type="ChEBI" id="CHEBI:33019"/>
        <dbReference type="ChEBI" id="CHEBI:60344"/>
        <dbReference type="ChEBI" id="CHEBI:60530"/>
        <dbReference type="ChEBI" id="CHEBI:175763"/>
        <dbReference type="EC" id="2.5.1.141"/>
    </reaction>
</comment>
<comment type="cofactor">
    <cofactor evidence="1">
        <name>Mg(2+)</name>
        <dbReference type="ChEBI" id="CHEBI:18420"/>
    </cofactor>
    <cofactor evidence="1">
        <name>Ca(2+)</name>
        <dbReference type="ChEBI" id="CHEBI:29108"/>
    </cofactor>
    <text evidence="1">Divalent metal cations. Mg(2+) or Ca(2+).</text>
</comment>
<comment type="subcellular location">
    <subcellularLocation>
        <location evidence="1">Cell inner membrane</location>
        <topology evidence="1">Multi-pass membrane protein</topology>
    </subcellularLocation>
</comment>
<comment type="similarity">
    <text evidence="3">Belongs to the UbiA prenyltransferase family.</text>
</comment>
<dbReference type="EC" id="2.5.1.141"/>
<dbReference type="EMBL" id="AB016787">
    <property type="protein sequence ID" value="BAA76360.1"/>
    <property type="molecule type" value="Genomic_DNA"/>
</dbReference>
<dbReference type="RefSeq" id="WP_025337747.1">
    <property type="nucleotide sequence ID" value="NZ_NFSB01000087.1"/>
</dbReference>
<dbReference type="SMR" id="Q9WWR5"/>
<dbReference type="eggNOG" id="COG0109">
    <property type="taxonomic scope" value="Bacteria"/>
</dbReference>
<dbReference type="GO" id="GO:0005886">
    <property type="term" value="C:plasma membrane"/>
    <property type="evidence" value="ECO:0007669"/>
    <property type="project" value="UniProtKB-SubCell"/>
</dbReference>
<dbReference type="GO" id="GO:0008495">
    <property type="term" value="F:protoheme IX farnesyltransferase activity"/>
    <property type="evidence" value="ECO:0007669"/>
    <property type="project" value="UniProtKB-UniRule"/>
</dbReference>
<dbReference type="GO" id="GO:0048034">
    <property type="term" value="P:heme O biosynthetic process"/>
    <property type="evidence" value="ECO:0007669"/>
    <property type="project" value="UniProtKB-UniRule"/>
</dbReference>
<dbReference type="CDD" id="cd13957">
    <property type="entry name" value="PT_UbiA_Cox10"/>
    <property type="match status" value="1"/>
</dbReference>
<dbReference type="FunFam" id="1.10.357.140:FF:000001">
    <property type="entry name" value="Protoheme IX farnesyltransferase"/>
    <property type="match status" value="1"/>
</dbReference>
<dbReference type="Gene3D" id="1.10.357.140">
    <property type="entry name" value="UbiA prenyltransferase"/>
    <property type="match status" value="1"/>
</dbReference>
<dbReference type="HAMAP" id="MF_00154">
    <property type="entry name" value="CyoE_CtaB"/>
    <property type="match status" value="1"/>
</dbReference>
<dbReference type="InterPro" id="IPR006369">
    <property type="entry name" value="Protohaem_IX_farnesylTrfase"/>
</dbReference>
<dbReference type="InterPro" id="IPR000537">
    <property type="entry name" value="UbiA_prenyltransferase"/>
</dbReference>
<dbReference type="InterPro" id="IPR030470">
    <property type="entry name" value="UbiA_prenylTrfase_CS"/>
</dbReference>
<dbReference type="InterPro" id="IPR044878">
    <property type="entry name" value="UbiA_sf"/>
</dbReference>
<dbReference type="NCBIfam" id="TIGR01473">
    <property type="entry name" value="cyoE_ctaB"/>
    <property type="match status" value="1"/>
</dbReference>
<dbReference type="NCBIfam" id="NF003348">
    <property type="entry name" value="PRK04375.1-1"/>
    <property type="match status" value="1"/>
</dbReference>
<dbReference type="PANTHER" id="PTHR43448">
    <property type="entry name" value="PROTOHEME IX FARNESYLTRANSFERASE, MITOCHONDRIAL"/>
    <property type="match status" value="1"/>
</dbReference>
<dbReference type="PANTHER" id="PTHR43448:SF2">
    <property type="entry name" value="PROTOHEME IX FARNESYLTRANSFERASE, MITOCHONDRIAL"/>
    <property type="match status" value="1"/>
</dbReference>
<dbReference type="Pfam" id="PF01040">
    <property type="entry name" value="UbiA"/>
    <property type="match status" value="1"/>
</dbReference>
<dbReference type="PROSITE" id="PS00943">
    <property type="entry name" value="UBIA"/>
    <property type="match status" value="1"/>
</dbReference>
<organism>
    <name type="scientific">Pseudomonas putida</name>
    <name type="common">Arthrobacter siderocapsulatus</name>
    <dbReference type="NCBI Taxonomy" id="303"/>
    <lineage>
        <taxon>Bacteria</taxon>
        <taxon>Pseudomonadati</taxon>
        <taxon>Pseudomonadota</taxon>
        <taxon>Gammaproteobacteria</taxon>
        <taxon>Pseudomonadales</taxon>
        <taxon>Pseudomonadaceae</taxon>
        <taxon>Pseudomonas</taxon>
    </lineage>
</organism>
<feature type="chain" id="PRO_0000162901" description="Protoheme IX farnesyltransferase">
    <location>
        <begin position="1"/>
        <end position="295"/>
    </location>
</feature>
<feature type="topological domain" description="Cytoplasmic" evidence="2">
    <location>
        <begin position="1"/>
        <end position="9"/>
    </location>
</feature>
<feature type="transmembrane region" description="Helical" evidence="2">
    <location>
        <begin position="10"/>
        <end position="28"/>
    </location>
</feature>
<feature type="topological domain" description="Periplasmic" evidence="2">
    <location>
        <begin position="29"/>
        <end position="37"/>
    </location>
</feature>
<feature type="transmembrane region" description="Helical" evidence="2">
    <location>
        <begin position="38"/>
        <end position="56"/>
    </location>
</feature>
<feature type="topological domain" description="Cytoplasmic" evidence="2">
    <location>
        <begin position="57"/>
        <end position="78"/>
    </location>
</feature>
<feature type="transmembrane region" description="Helical" evidence="2">
    <location>
        <begin position="79"/>
        <end position="97"/>
    </location>
</feature>
<feature type="topological domain" description="Periplasmic" evidence="2">
    <location>
        <begin position="98"/>
        <end position="107"/>
    </location>
</feature>
<feature type="transmembrane region" description="Helical" evidence="2">
    <location>
        <begin position="108"/>
        <end position="126"/>
    </location>
</feature>
<feature type="topological domain" description="Cytoplasmic" evidence="2">
    <location>
        <begin position="127"/>
        <end position="197"/>
    </location>
</feature>
<feature type="transmembrane region" description="Helical" evidence="2">
    <location>
        <begin position="198"/>
        <end position="216"/>
    </location>
</feature>
<feature type="topological domain" description="Periplasmic" evidence="2">
    <location>
        <begin position="217"/>
        <end position="228"/>
    </location>
</feature>
<feature type="transmembrane region" description="Helical" evidence="2">
    <location>
        <begin position="229"/>
        <end position="247"/>
    </location>
</feature>
<feature type="topological domain" description="Cytoplasmic" evidence="2">
    <location>
        <begin position="248"/>
        <end position="268"/>
    </location>
</feature>
<feature type="transmembrane region" description="Helical" evidence="2">
    <location>
        <begin position="269"/>
        <end position="287"/>
    </location>
</feature>
<feature type="topological domain" description="Periplasmic" evidence="2">
    <location>
        <begin position="288"/>
        <end position="295"/>
    </location>
</feature>